<reference key="1">
    <citation type="journal article" date="1996" name="DNA Res.">
        <title>A 718-kb DNA sequence of the Escherichia coli K-12 genome corresponding to the 12.7-28.0 min region on the linkage map.</title>
        <authorList>
            <person name="Oshima T."/>
            <person name="Aiba H."/>
            <person name="Baba T."/>
            <person name="Fujita K."/>
            <person name="Hayashi K."/>
            <person name="Honjo A."/>
            <person name="Ikemoto K."/>
            <person name="Inada T."/>
            <person name="Itoh T."/>
            <person name="Kajihara M."/>
            <person name="Kanai K."/>
            <person name="Kashimoto K."/>
            <person name="Kimura S."/>
            <person name="Kitagawa M."/>
            <person name="Makino K."/>
            <person name="Masuda S."/>
            <person name="Miki T."/>
            <person name="Mizobuchi K."/>
            <person name="Mori H."/>
            <person name="Motomura K."/>
            <person name="Nakamura Y."/>
            <person name="Nashimoto H."/>
            <person name="Nishio Y."/>
            <person name="Saito N."/>
            <person name="Sampei G."/>
            <person name="Seki Y."/>
            <person name="Tagami H."/>
            <person name="Takemoto K."/>
            <person name="Wada C."/>
            <person name="Yamamoto Y."/>
            <person name="Yano M."/>
            <person name="Horiuchi T."/>
        </authorList>
    </citation>
    <scope>NUCLEOTIDE SEQUENCE [LARGE SCALE GENOMIC DNA]</scope>
    <source>
        <strain>K12 / W3110 / ATCC 27325 / DSM 5911</strain>
    </source>
</reference>
<reference key="2">
    <citation type="journal article" date="1997" name="Science">
        <title>The complete genome sequence of Escherichia coli K-12.</title>
        <authorList>
            <person name="Blattner F.R."/>
            <person name="Plunkett G. III"/>
            <person name="Bloch C.A."/>
            <person name="Perna N.T."/>
            <person name="Burland V."/>
            <person name="Riley M."/>
            <person name="Collado-Vides J."/>
            <person name="Glasner J.D."/>
            <person name="Rode C.K."/>
            <person name="Mayhew G.F."/>
            <person name="Gregor J."/>
            <person name="Davis N.W."/>
            <person name="Kirkpatrick H.A."/>
            <person name="Goeden M.A."/>
            <person name="Rose D.J."/>
            <person name="Mau B."/>
            <person name="Shao Y."/>
        </authorList>
    </citation>
    <scope>NUCLEOTIDE SEQUENCE [LARGE SCALE GENOMIC DNA]</scope>
    <source>
        <strain>K12 / MG1655 / ATCC 47076</strain>
    </source>
</reference>
<reference key="3">
    <citation type="journal article" date="2006" name="Mol. Syst. Biol.">
        <title>Highly accurate genome sequences of Escherichia coli K-12 strains MG1655 and W3110.</title>
        <authorList>
            <person name="Hayashi K."/>
            <person name="Morooka N."/>
            <person name="Yamamoto Y."/>
            <person name="Fujita K."/>
            <person name="Isono K."/>
            <person name="Choi S."/>
            <person name="Ohtsubo E."/>
            <person name="Baba T."/>
            <person name="Wanner B.L."/>
            <person name="Mori H."/>
            <person name="Horiuchi T."/>
        </authorList>
    </citation>
    <scope>NUCLEOTIDE SEQUENCE [LARGE SCALE GENOMIC DNA]</scope>
    <source>
        <strain>K12 / W3110 / ATCC 27325 / DSM 5911</strain>
    </source>
</reference>
<reference key="4">
    <citation type="journal article" date="2001" name="EMBO J.">
        <title>The dihydroxyacetone kinase of Escherichia coli utilizes a phosphoprotein instead of ATP as phosphoryl donor.</title>
        <authorList>
            <person name="Gutknecht R."/>
            <person name="Beutler R."/>
            <person name="Garcia-Alles L.F."/>
            <person name="Baumann U."/>
            <person name="Erni B."/>
        </authorList>
    </citation>
    <scope>FUNCTION</scope>
    <scope>CATALYTIC ACTIVITY OF THE COMPLEX</scope>
    <scope>BIOPHYSICOCHEMICAL PROPERTIES</scope>
    <source>
        <strain>K12</strain>
    </source>
</reference>
<reference key="5">
    <citation type="journal article" date="2005" name="EMBO J.">
        <title>Escherichia coli dihydroxyacetone kinase controls gene expression by binding to transcription factor DhaR.</title>
        <authorList>
            <person name="Baechler C."/>
            <person name="Schneider P."/>
            <person name="Baehler P."/>
            <person name="Lustig A."/>
            <person name="Erni B."/>
        </authorList>
    </citation>
    <scope>INDUCTION</scope>
</reference>
<reference key="6">
    <citation type="journal article" date="2003" name="Proc. Natl. Acad. Sci. U.S.A.">
        <title>A mechanism of covalent substrate binding in the X-ray structure of subunit K of the Escherichia coli dihydroxyacetone kinase.</title>
        <authorList>
            <person name="Siebold C."/>
            <person name="Garcia-Alles L.F."/>
            <person name="Erni B."/>
            <person name="Baumann U."/>
        </authorList>
    </citation>
    <scope>X-RAY CRYSTALLOGRAPHY (1.75 ANGSTROMS) IN COMPLEX WITH DIHYDROXYACETONE ANALOG</scope>
    <scope>ACTIVE SITE</scope>
    <scope>SUBUNIT</scope>
    <scope>MUTAGENESIS OF HIS-218</scope>
</reference>
<reference key="7">
    <citation type="journal article" date="2004" name="Biochemistry">
        <title>Phosphoenolpyruvate- and ATP-dependent dihydroxyacetone kinases: covalent substrate-binding and kinetic mechanism.</title>
        <authorList>
            <person name="Garcia-Alles L.F."/>
            <person name="Siebold C."/>
            <person name="Luethi Nyffeler T."/>
            <person name="Fluekiger-Bruehwiler K."/>
            <person name="Schneider P."/>
            <person name="Buergi H.-B."/>
            <person name="Baumann U."/>
            <person name="Erni B."/>
        </authorList>
    </citation>
    <scope>X-RAY CRYSTALLOGRAPHY (1.9 ANGSTROMS) IN COMPLEX WITH DIHYDROXYACETONE ANALOG</scope>
    <scope>FUNCTION</scope>
    <scope>ACTIVITY REGULATION</scope>
    <scope>ACTIVE SITE</scope>
    <scope>SUBUNIT</scope>
    <scope>BIOPHYSICOCHEMICAL PROPERTIES</scope>
</reference>
<reference key="8">
    <citation type="journal article" date="2011" name="Proc. Natl. Acad. Sci. U.S.A.">
        <title>Structural and mechanistic insight into covalent substrate binding by Escherichia coli dihydroxyacetone kinase.</title>
        <authorList>
            <person name="Shi R."/>
            <person name="McDonald L."/>
            <person name="Cui Q."/>
            <person name="Matte A."/>
            <person name="Cygler M."/>
            <person name="Ekiel I."/>
        </authorList>
    </citation>
    <scope>X-RAY CRYSTALLOGRAPHY (1.97 ANGSTROMS) OF 2-356 IN COMPLEX WITH DIHYDROXYACETONE ANALOG</scope>
    <scope>MUTAGENESIS OF HIS-56; ASP-109 AND HIS-218</scope>
    <scope>ACTIVE SITE</scope>
    <scope>REACTION MECHANISM</scope>
</reference>
<reference key="9">
    <citation type="journal article" date="2014" name="Structure">
        <title>Coiled-coil helix rotation selects repressing or activating state of transcriptional regulator DhaR.</title>
        <authorList>
            <person name="Shi R."/>
            <person name="McDonald L."/>
            <person name="Cygler M."/>
            <person name="Ekiel I."/>
        </authorList>
    </citation>
    <scope>X-RAY CRYSTALLOGRAPHY (2.83 ANGSTROMS) IN COMPLEX WITH DHAR</scope>
    <scope>FUNCTION</scope>
    <scope>INDUCTION</scope>
    <scope>SUBUNIT</scope>
</reference>
<dbReference type="EC" id="2.7.1.121" evidence="2"/>
<dbReference type="EMBL" id="U00096">
    <property type="protein sequence ID" value="AAC74284.2"/>
    <property type="molecule type" value="Genomic_DNA"/>
</dbReference>
<dbReference type="EMBL" id="AP009048">
    <property type="protein sequence ID" value="BAA36057.2"/>
    <property type="molecule type" value="Genomic_DNA"/>
</dbReference>
<dbReference type="PIR" id="E64866">
    <property type="entry name" value="E64866"/>
</dbReference>
<dbReference type="RefSeq" id="NP_415718.6">
    <property type="nucleotide sequence ID" value="NC_000913.3"/>
</dbReference>
<dbReference type="RefSeq" id="WP_000733715.1">
    <property type="nucleotide sequence ID" value="NZ_SSZK01000010.1"/>
</dbReference>
<dbReference type="PDB" id="1OI2">
    <property type="method" value="X-ray"/>
    <property type="resolution" value="1.75 A"/>
    <property type="chains" value="A/B=1-356"/>
</dbReference>
<dbReference type="PDB" id="1OI3">
    <property type="method" value="X-ray"/>
    <property type="resolution" value="2.00 A"/>
    <property type="chains" value="A/B=1-356"/>
</dbReference>
<dbReference type="PDB" id="1UOD">
    <property type="method" value="X-ray"/>
    <property type="resolution" value="1.90 A"/>
    <property type="chains" value="A/B=1-356"/>
</dbReference>
<dbReference type="PDB" id="1UOE">
    <property type="method" value="X-ray"/>
    <property type="resolution" value="2.00 A"/>
    <property type="chains" value="A/B=1-356"/>
</dbReference>
<dbReference type="PDB" id="3PNK">
    <property type="method" value="X-ray"/>
    <property type="resolution" value="2.21 A"/>
    <property type="chains" value="A/B=2-356"/>
</dbReference>
<dbReference type="PDB" id="3PNL">
    <property type="method" value="X-ray"/>
    <property type="resolution" value="2.20 A"/>
    <property type="chains" value="A=2-356"/>
</dbReference>
<dbReference type="PDB" id="3PNM">
    <property type="method" value="X-ray"/>
    <property type="resolution" value="2.55 A"/>
    <property type="chains" value="A/B/C/D=2-356"/>
</dbReference>
<dbReference type="PDB" id="3PNO">
    <property type="method" value="X-ray"/>
    <property type="resolution" value="1.97 A"/>
    <property type="chains" value="A/B/C/D=2-356"/>
</dbReference>
<dbReference type="PDB" id="3PNQ">
    <property type="method" value="X-ray"/>
    <property type="resolution" value="2.20 A"/>
    <property type="chains" value="A/B/C/D=2-356"/>
</dbReference>
<dbReference type="PDB" id="4LRX">
    <property type="method" value="X-ray"/>
    <property type="resolution" value="3.25 A"/>
    <property type="chains" value="A/B=1-356"/>
</dbReference>
<dbReference type="PDB" id="4LRY">
    <property type="method" value="X-ray"/>
    <property type="resolution" value="2.83 A"/>
    <property type="chains" value="A/B=1-356"/>
</dbReference>
<dbReference type="PDBsum" id="1OI2"/>
<dbReference type="PDBsum" id="1OI3"/>
<dbReference type="PDBsum" id="1UOD"/>
<dbReference type="PDBsum" id="1UOE"/>
<dbReference type="PDBsum" id="3PNK"/>
<dbReference type="PDBsum" id="3PNL"/>
<dbReference type="PDBsum" id="3PNM"/>
<dbReference type="PDBsum" id="3PNO"/>
<dbReference type="PDBsum" id="3PNQ"/>
<dbReference type="PDBsum" id="4LRX"/>
<dbReference type="PDBsum" id="4LRY"/>
<dbReference type="SMR" id="P76015"/>
<dbReference type="BioGRID" id="4260718">
    <property type="interactions" value="16"/>
</dbReference>
<dbReference type="BioGRID" id="850114">
    <property type="interactions" value="3"/>
</dbReference>
<dbReference type="ComplexPortal" id="CPX-2634">
    <property type="entry name" value="Dha Kinase"/>
</dbReference>
<dbReference type="DIP" id="DIP-11563N"/>
<dbReference type="FunCoup" id="P76015">
    <property type="interactions" value="517"/>
</dbReference>
<dbReference type="IntAct" id="P76015">
    <property type="interactions" value="7"/>
</dbReference>
<dbReference type="STRING" id="511145.b1200"/>
<dbReference type="MoonProt" id="P76015"/>
<dbReference type="jPOST" id="P76015"/>
<dbReference type="PaxDb" id="511145-b1200"/>
<dbReference type="EnsemblBacteria" id="AAC74284">
    <property type="protein sequence ID" value="AAC74284"/>
    <property type="gene ID" value="b1200"/>
</dbReference>
<dbReference type="GeneID" id="945747"/>
<dbReference type="KEGG" id="ecj:JW5187"/>
<dbReference type="KEGG" id="eco:b1200"/>
<dbReference type="KEGG" id="ecoc:C3026_07055"/>
<dbReference type="PATRIC" id="fig|1411691.4.peg.1085"/>
<dbReference type="EchoBASE" id="EB3660"/>
<dbReference type="eggNOG" id="COG2376">
    <property type="taxonomic scope" value="Bacteria"/>
</dbReference>
<dbReference type="HOGENOM" id="CLU_017054_0_0_6"/>
<dbReference type="InParanoid" id="P76015"/>
<dbReference type="OMA" id="MLSAACP"/>
<dbReference type="OrthoDB" id="9806345at2"/>
<dbReference type="PhylomeDB" id="P76015"/>
<dbReference type="BioCyc" id="EcoCyc:G6627-MONOMER"/>
<dbReference type="BioCyc" id="MetaCyc:G6627-MONOMER"/>
<dbReference type="BRENDA" id="2.7.1.121">
    <property type="organism ID" value="2026"/>
</dbReference>
<dbReference type="BRENDA" id="2.7.1.29">
    <property type="organism ID" value="2026"/>
</dbReference>
<dbReference type="SABIO-RK" id="P76015"/>
<dbReference type="UniPathway" id="UPA00616"/>
<dbReference type="EvolutionaryTrace" id="P76015"/>
<dbReference type="PRO" id="PR:P76015"/>
<dbReference type="Proteomes" id="UP000000625">
    <property type="component" value="Chromosome"/>
</dbReference>
<dbReference type="GO" id="GO:0005829">
    <property type="term" value="C:cytosol"/>
    <property type="evidence" value="ECO:0000314"/>
    <property type="project" value="EcoCyc"/>
</dbReference>
<dbReference type="GO" id="GO:1990234">
    <property type="term" value="C:transferase complex"/>
    <property type="evidence" value="ECO:0000353"/>
    <property type="project" value="ComplexPortal"/>
</dbReference>
<dbReference type="GO" id="GO:0004371">
    <property type="term" value="F:glycerone kinase activity"/>
    <property type="evidence" value="ECO:0000318"/>
    <property type="project" value="GO_Central"/>
</dbReference>
<dbReference type="GO" id="GO:0042802">
    <property type="term" value="F:identical protein binding"/>
    <property type="evidence" value="ECO:0000353"/>
    <property type="project" value="IntAct"/>
</dbReference>
<dbReference type="GO" id="GO:0047324">
    <property type="term" value="F:phosphoenolpyruvate-glycerone phosphotransferase activity"/>
    <property type="evidence" value="ECO:0000315"/>
    <property type="project" value="EcoCyc"/>
</dbReference>
<dbReference type="GO" id="GO:0042803">
    <property type="term" value="F:protein homodimerization activity"/>
    <property type="evidence" value="ECO:0000314"/>
    <property type="project" value="EcoCyc"/>
</dbReference>
<dbReference type="GO" id="GO:0046835">
    <property type="term" value="P:carbohydrate phosphorylation"/>
    <property type="evidence" value="ECO:0000314"/>
    <property type="project" value="ComplexPortal"/>
</dbReference>
<dbReference type="GO" id="GO:0006974">
    <property type="term" value="P:DNA damage response"/>
    <property type="evidence" value="ECO:0000270"/>
    <property type="project" value="EcoliWiki"/>
</dbReference>
<dbReference type="GO" id="GO:0019563">
    <property type="term" value="P:glycerol catabolic process"/>
    <property type="evidence" value="ECO:0000318"/>
    <property type="project" value="GO_Central"/>
</dbReference>
<dbReference type="GO" id="GO:0061610">
    <property type="term" value="P:glycerol to glycerone phosphate metabolic process"/>
    <property type="evidence" value="ECO:0000315"/>
    <property type="project" value="EcoCyc"/>
</dbReference>
<dbReference type="GO" id="GO:0042182">
    <property type="term" value="P:ketone catabolic process"/>
    <property type="evidence" value="ECO:0000315"/>
    <property type="project" value="EcoCyc"/>
</dbReference>
<dbReference type="GO" id="GO:0046365">
    <property type="term" value="P:monosaccharide catabolic process"/>
    <property type="evidence" value="ECO:0000315"/>
    <property type="project" value="EcoCyc"/>
</dbReference>
<dbReference type="GO" id="GO:0006090">
    <property type="term" value="P:pyruvate metabolic process"/>
    <property type="evidence" value="ECO:0000314"/>
    <property type="project" value="ComplexPortal"/>
</dbReference>
<dbReference type="FunFam" id="3.30.1180.20:FF:000002">
    <property type="entry name" value="Dihydroxyacetone kinase subunit DhaK"/>
    <property type="match status" value="1"/>
</dbReference>
<dbReference type="FunFam" id="3.40.50.10440:FF:000001">
    <property type="entry name" value="Dihydroxyacetone kinase, DhaK subunit"/>
    <property type="match status" value="1"/>
</dbReference>
<dbReference type="Gene3D" id="3.40.50.10440">
    <property type="entry name" value="Dihydroxyacetone kinase, domain 1"/>
    <property type="match status" value="1"/>
</dbReference>
<dbReference type="Gene3D" id="3.30.1180.20">
    <property type="entry name" value="Dihydroxyacetone kinase, domain 2"/>
    <property type="match status" value="1"/>
</dbReference>
<dbReference type="InterPro" id="IPR012736">
    <property type="entry name" value="DhaK_1"/>
</dbReference>
<dbReference type="InterPro" id="IPR004006">
    <property type="entry name" value="DhaK_dom"/>
</dbReference>
<dbReference type="InterPro" id="IPR050861">
    <property type="entry name" value="Dihydroxyacetone_Kinase"/>
</dbReference>
<dbReference type="NCBIfam" id="TIGR02363">
    <property type="entry name" value="dhaK1"/>
    <property type="match status" value="1"/>
</dbReference>
<dbReference type="PANTHER" id="PTHR28629">
    <property type="entry name" value="TRIOKINASE/FMN CYCLASE"/>
    <property type="match status" value="1"/>
</dbReference>
<dbReference type="PANTHER" id="PTHR28629:SF4">
    <property type="entry name" value="TRIOKINASE_FMN CYCLASE"/>
    <property type="match status" value="1"/>
</dbReference>
<dbReference type="Pfam" id="PF02733">
    <property type="entry name" value="Dak1"/>
    <property type="match status" value="1"/>
</dbReference>
<dbReference type="SUPFAM" id="SSF82549">
    <property type="entry name" value="DAK1/DegV-like"/>
    <property type="match status" value="1"/>
</dbReference>
<dbReference type="PROSITE" id="PS51481">
    <property type="entry name" value="DHAK"/>
    <property type="match status" value="1"/>
</dbReference>
<accession>P76015</accession>
<organism>
    <name type="scientific">Escherichia coli (strain K12)</name>
    <dbReference type="NCBI Taxonomy" id="83333"/>
    <lineage>
        <taxon>Bacteria</taxon>
        <taxon>Pseudomonadati</taxon>
        <taxon>Pseudomonadota</taxon>
        <taxon>Gammaproteobacteria</taxon>
        <taxon>Enterobacterales</taxon>
        <taxon>Enterobacteriaceae</taxon>
        <taxon>Escherichia</taxon>
    </lineage>
</organism>
<gene>
    <name evidence="8" type="primary">dhaK</name>
    <name type="synonym">ycgT</name>
    <name type="ordered locus">b1200</name>
    <name type="ordered locus">JW5187</name>
</gene>
<protein>
    <recommendedName>
        <fullName evidence="8">PEP-dependent dihydroxyacetone kinase, dihydroxyacetone-binding subunit DhaK</fullName>
        <ecNumber evidence="2">2.7.1.121</ecNumber>
    </recommendedName>
</protein>
<comment type="function">
    <text evidence="2 4 7">Dihydroxyacetone binding subunit of the dihydroxyacetone kinase, which is responsible for the phosphoenolpyruvate (PEP)-dependent phosphorylation of dihydroxyacetone via a phosphoryl group transfer from DhaL-ATP (PubMed:11350937, PubMed:15476397). Binds covalently dihydroxyacetone in hemiaminal linkage (PubMed:15476397). DhaK also acts as corepressor of the transcription activator DhaR by binding to the sensor domain of DhaR (PubMed:24440518). In the presence of dihydroxyacetone, DhaL-ADP displaces DhaK and stimulates DhaR activity (PubMed:24440518). In the absence of dihydroxyacetone, DhaL-ADP is converted by the PTS to DhaL-ATP, which does not bind to DhaR (PubMed:24440518).</text>
</comment>
<comment type="catalytic activity">
    <reaction evidence="2">
        <text>dihydroxyacetone + phosphoenolpyruvate = dihydroxyacetone phosphate + pyruvate</text>
        <dbReference type="Rhea" id="RHEA:18381"/>
        <dbReference type="ChEBI" id="CHEBI:15361"/>
        <dbReference type="ChEBI" id="CHEBI:16016"/>
        <dbReference type="ChEBI" id="CHEBI:57642"/>
        <dbReference type="ChEBI" id="CHEBI:58702"/>
        <dbReference type="EC" id="2.7.1.121"/>
    </reaction>
</comment>
<comment type="activity regulation">
    <text evidence="4">Inhibited by chloro-3-hydroxyacetone and D,L-glyceraldehyde.</text>
</comment>
<comment type="biophysicochemical properties">
    <kinetics>
        <KM evidence="2">45 uM for dihydroxyacetone</KM>
        <KM evidence="4">6 uM for dihydroxyacetone</KM>
        <KM evidence="4">110 uM for D,L-glyceraldehyde</KM>
        <text evidence="2 4">kcat is 2.8 sec(-1) with dihydroxyacetone as substrate. Values measured with the DhaKLM complex (PubMed:11350937). kcat is 290 min(-1) with dihydroxyacetone as substrate. kcat is 12.5 min(-1) with D,L-glyceraldehyde as substrate (PubMed:15476397).</text>
    </kinetics>
</comment>
<comment type="pathway">
    <text evidence="9">Polyol metabolism; glycerol degradation.</text>
</comment>
<comment type="subunit">
    <text evidence="3 4 7">Homodimer (PubMed:12813127, PubMed:15476397, PubMed:24440518). The dihydroxyacetone kinase complex is composed of a homodimer of DhaM, a homodimer of DhaK and the subunit DhaL (PubMed:12813127, PubMed:15476397). DhaL also forms a complex with DhaR (PubMed:24440518).</text>
</comment>
<comment type="interaction">
    <interactant intactId="EBI-544485">
        <id>P76015</id>
    </interactant>
    <interactant intactId="EBI-544485">
        <id>P76015</id>
        <label>dhaK</label>
    </interactant>
    <organismsDiffer>false</organismsDiffer>
    <experiments>2</experiments>
</comment>
<comment type="interaction">
    <interactant intactId="EBI-544485">
        <id>P76015</id>
    </interactant>
    <interactant intactId="EBI-9021529">
        <id>P76014</id>
        <label>dhaL</label>
    </interactant>
    <organismsDiffer>false</organismsDiffer>
    <experiments>2</experiments>
</comment>
<comment type="interaction">
    <interactant intactId="EBI-544485">
        <id>P76015</id>
    </interactant>
    <interactant intactId="EBI-9153808">
        <id>P76016</id>
        <label>dhaR</label>
    </interactant>
    <organismsDiffer>false</organismsDiffer>
    <experiments>4</experiments>
</comment>
<comment type="interaction">
    <interactant intactId="EBI-544485">
        <id>P76015</id>
    </interactant>
    <interactant intactId="EBI-544491">
        <id>P60560</id>
        <label>guaC</label>
    </interactant>
    <organismsDiffer>false</organismsDiffer>
    <experiments>2</experiments>
</comment>
<comment type="interaction">
    <interactant intactId="EBI-544485">
        <id>P76015</id>
    </interactant>
    <interactant intactId="EBI-547277">
        <id>P20083</id>
        <label>parE</label>
    </interactant>
    <organismsDiffer>false</organismsDiffer>
    <experiments>3</experiments>
</comment>
<comment type="interaction">
    <interactant intactId="EBI-544485">
        <id>P76015</id>
    </interactant>
    <interactant intactId="EBI-544500">
        <id>P37624</id>
        <label>rbbA</label>
    </interactant>
    <organismsDiffer>false</organismsDiffer>
    <experiments>2</experiments>
</comment>
<comment type="induction">
    <text evidence="5 7">Activated by DhaR.</text>
</comment>
<comment type="miscellaneous">
    <text evidence="10">Unlike the carbohydrate-specific transporters of the PTS, the complex DhaKML has no transport activity.</text>
</comment>
<sequence length="356" mass="38215">MKKLINDVQDVLDEQLAGLAKAHPSLTLHQDPVYVTRADAPVAGKVALLSGGGSGHEPMHCGYIGQGMLSGACPGEIFTSPTPDKIFECAMQVDGGEGVLLIIKNYTGDILNFETATELLHDSGVKVTTVVIDDDVAVKDSLYTAGRRGVANTVLIEKLVGAAAERGDSLDACAELGRKLNNQGHSIGIALGACTVPAAGKPSFTLADNEMEFGVGIHGEPGIDRRPFSSLDQTVDEMFDTLLVNGSYHRTLRFWDYQQGSWQEEQQTKQPLQSGDRVIALVNNLGATPLSELYGVYNRLTTRCQQAGLTIERNLIGAYCTSLDMTGFSITLLKVDDETLALWDAPVHTPALNWGK</sequence>
<proteinExistence type="evidence at protein level"/>
<name>DHAK_ECOLI</name>
<evidence type="ECO:0000255" key="1">
    <source>
        <dbReference type="PROSITE-ProRule" id="PRU00814"/>
    </source>
</evidence>
<evidence type="ECO:0000269" key="2">
    <source>
    </source>
</evidence>
<evidence type="ECO:0000269" key="3">
    <source>
    </source>
</evidence>
<evidence type="ECO:0000269" key="4">
    <source>
    </source>
</evidence>
<evidence type="ECO:0000269" key="5">
    <source>
    </source>
</evidence>
<evidence type="ECO:0000269" key="6">
    <source>
    </source>
</evidence>
<evidence type="ECO:0000269" key="7">
    <source>
    </source>
</evidence>
<evidence type="ECO:0000303" key="8">
    <source>
    </source>
</evidence>
<evidence type="ECO:0000305" key="9"/>
<evidence type="ECO:0000305" key="10">
    <source>
    </source>
</evidence>
<evidence type="ECO:0000305" key="11">
    <source>
    </source>
</evidence>
<evidence type="ECO:0007744" key="12">
    <source>
        <dbReference type="PDB" id="1OI2"/>
    </source>
</evidence>
<evidence type="ECO:0007744" key="13">
    <source>
        <dbReference type="PDB" id="1UOD"/>
    </source>
</evidence>
<evidence type="ECO:0007744" key="14">
    <source>
        <dbReference type="PDB" id="1UOE"/>
    </source>
</evidence>
<evidence type="ECO:0007744" key="15">
    <source>
        <dbReference type="PDB" id="3PNK"/>
    </source>
</evidence>
<evidence type="ECO:0007744" key="16">
    <source>
        <dbReference type="PDB" id="3PNL"/>
    </source>
</evidence>
<evidence type="ECO:0007744" key="17">
    <source>
        <dbReference type="PDB" id="3PNQ"/>
    </source>
</evidence>
<evidence type="ECO:0007829" key="18">
    <source>
        <dbReference type="PDB" id="1OI2"/>
    </source>
</evidence>
<evidence type="ECO:0007829" key="19">
    <source>
        <dbReference type="PDB" id="3PNK"/>
    </source>
</evidence>
<evidence type="ECO:0007829" key="20">
    <source>
        <dbReference type="PDB" id="3PNL"/>
    </source>
</evidence>
<evidence type="ECO:0007829" key="21">
    <source>
        <dbReference type="PDB" id="4LRY"/>
    </source>
</evidence>
<feature type="chain" id="PRO_0000121529" description="PEP-dependent dihydroxyacetone kinase, dihydroxyacetone-binding subunit DhaK">
    <location>
        <begin position="1"/>
        <end position="356"/>
    </location>
</feature>
<feature type="domain" description="DhaK" evidence="1">
    <location>
        <begin position="7"/>
        <end position="352"/>
    </location>
</feature>
<feature type="active site" description="Proton acceptor" evidence="11">
    <location>
        <position position="56"/>
    </location>
</feature>
<feature type="active site" description="Tele-hemiaminal-histidine intermediate" evidence="1 3 4 6 12 13 14 15 16 17">
    <location>
        <position position="218"/>
    </location>
</feature>
<feature type="binding site" evidence="3 4 6 12 13 14 15 16 17">
    <location>
        <begin position="53"/>
        <end position="56"/>
    </location>
    <ligand>
        <name>dihydroxyacetone</name>
        <dbReference type="ChEBI" id="CHEBI:16016"/>
    </ligand>
</feature>
<feature type="binding site" evidence="3 6 12 15 16 17">
    <location>
        <position position="104"/>
    </location>
    <ligand>
        <name>dihydroxyacetone</name>
        <dbReference type="ChEBI" id="CHEBI:16016"/>
    </ligand>
</feature>
<feature type="binding site" evidence="3 4 6 12 13 14 15 16 17">
    <location>
        <position position="109"/>
    </location>
    <ligand>
        <name>dihydroxyacetone</name>
        <dbReference type="ChEBI" id="CHEBI:16016"/>
    </ligand>
</feature>
<feature type="mutagenesis site" description="Shows a moderate decrease in the catalytic efficiency but at least a 40- to 300-fold increase in affinity for dihydroxyacetone." evidence="6">
    <original>H</original>
    <variation>A</variation>
    <variation>N</variation>
    <location>
        <position position="56"/>
    </location>
</feature>
<feature type="mutagenesis site" description="Loss of kinase activity." evidence="6">
    <original>D</original>
    <variation>A</variation>
    <variation>N</variation>
    <location>
        <position position="109"/>
    </location>
</feature>
<feature type="mutagenesis site" description="Loss of kinase activity." evidence="3 6">
    <original>H</original>
    <variation>A</variation>
    <variation>K</variation>
    <location>
        <position position="218"/>
    </location>
</feature>
<feature type="helix" evidence="20">
    <location>
        <begin position="8"/>
        <end position="10"/>
    </location>
</feature>
<feature type="helix" evidence="18">
    <location>
        <begin position="11"/>
        <end position="22"/>
    </location>
</feature>
<feature type="strand" evidence="18">
    <location>
        <begin position="26"/>
        <end position="29"/>
    </location>
</feature>
<feature type="turn" evidence="18">
    <location>
        <begin position="30"/>
        <end position="33"/>
    </location>
</feature>
<feature type="strand" evidence="18">
    <location>
        <begin position="34"/>
        <end position="37"/>
    </location>
</feature>
<feature type="strand" evidence="18">
    <location>
        <begin position="47"/>
        <end position="56"/>
    </location>
</feature>
<feature type="turn" evidence="18">
    <location>
        <begin position="57"/>
        <end position="60"/>
    </location>
</feature>
<feature type="helix" evidence="18">
    <location>
        <begin position="61"/>
        <end position="63"/>
    </location>
</feature>
<feature type="strand" evidence="18">
    <location>
        <begin position="64"/>
        <end position="66"/>
    </location>
</feature>
<feature type="strand" evidence="18">
    <location>
        <begin position="68"/>
        <end position="77"/>
    </location>
</feature>
<feature type="helix" evidence="18">
    <location>
        <begin position="83"/>
        <end position="93"/>
    </location>
</feature>
<feature type="strand" evidence="18">
    <location>
        <begin position="99"/>
        <end position="106"/>
    </location>
</feature>
<feature type="helix" evidence="18">
    <location>
        <begin position="107"/>
        <end position="122"/>
    </location>
</feature>
<feature type="strand" evidence="18">
    <location>
        <begin position="127"/>
        <end position="132"/>
    </location>
</feature>
<feature type="strand" evidence="19">
    <location>
        <begin position="140"/>
        <end position="142"/>
    </location>
</feature>
<feature type="strand" evidence="18">
    <location>
        <begin position="145"/>
        <end position="147"/>
    </location>
</feature>
<feature type="helix" evidence="18">
    <location>
        <begin position="152"/>
        <end position="166"/>
    </location>
</feature>
<feature type="helix" evidence="18">
    <location>
        <begin position="170"/>
        <end position="181"/>
    </location>
</feature>
<feature type="strand" evidence="18">
    <location>
        <begin position="184"/>
        <end position="192"/>
    </location>
</feature>
<feature type="turn" evidence="20">
    <location>
        <begin position="197"/>
        <end position="199"/>
    </location>
</feature>
<feature type="strand" evidence="21">
    <location>
        <begin position="201"/>
        <end position="203"/>
    </location>
</feature>
<feature type="strand" evidence="18">
    <location>
        <begin position="210"/>
        <end position="213"/>
    </location>
</feature>
<feature type="strand" evidence="19">
    <location>
        <begin position="217"/>
        <end position="219"/>
    </location>
</feature>
<feature type="strand" evidence="18">
    <location>
        <begin position="223"/>
        <end position="227"/>
    </location>
</feature>
<feature type="helix" evidence="18">
    <location>
        <begin position="231"/>
        <end position="244"/>
    </location>
</feature>
<feature type="strand" evidence="18">
    <location>
        <begin position="248"/>
        <end position="256"/>
    </location>
</feature>
<feature type="turn" evidence="18">
    <location>
        <begin position="257"/>
        <end position="260"/>
    </location>
</feature>
<feature type="strand" evidence="18">
    <location>
        <begin position="261"/>
        <end position="269"/>
    </location>
</feature>
<feature type="strand" evidence="18">
    <location>
        <begin position="277"/>
        <end position="284"/>
    </location>
</feature>
<feature type="strand" evidence="20">
    <location>
        <begin position="286"/>
        <end position="288"/>
    </location>
</feature>
<feature type="helix" evidence="18">
    <location>
        <begin position="290"/>
        <end position="307"/>
    </location>
</feature>
<feature type="strand" evidence="18">
    <location>
        <begin position="310"/>
        <end position="317"/>
    </location>
</feature>
<feature type="strand" evidence="18">
    <location>
        <begin position="325"/>
        <end position="335"/>
    </location>
</feature>
<feature type="helix" evidence="18">
    <location>
        <begin position="337"/>
        <end position="344"/>
    </location>
</feature>
<feature type="strand" evidence="18">
    <location>
        <begin position="347"/>
        <end position="351"/>
    </location>
</feature>
<keyword id="KW-0002">3D-structure</keyword>
<keyword id="KW-0319">Glycerol metabolism</keyword>
<keyword id="KW-0418">Kinase</keyword>
<keyword id="KW-1185">Reference proteome</keyword>
<keyword id="KW-0808">Transferase</keyword>